<organism>
    <name type="scientific">Sulfurihydrogenibium sp. (strain YO3AOP1)</name>
    <dbReference type="NCBI Taxonomy" id="436114"/>
    <lineage>
        <taxon>Bacteria</taxon>
        <taxon>Pseudomonadati</taxon>
        <taxon>Aquificota</taxon>
        <taxon>Aquificia</taxon>
        <taxon>Aquificales</taxon>
        <taxon>Hydrogenothermaceae</taxon>
        <taxon>Sulfurihydrogenibium</taxon>
    </lineage>
</organism>
<dbReference type="EC" id="2.1.3.15" evidence="1"/>
<dbReference type="EMBL" id="CP001080">
    <property type="protein sequence ID" value="ACD67053.1"/>
    <property type="molecule type" value="Genomic_DNA"/>
</dbReference>
<dbReference type="RefSeq" id="WP_012460110.1">
    <property type="nucleotide sequence ID" value="NC_010730.1"/>
</dbReference>
<dbReference type="SMR" id="B2V5V9"/>
<dbReference type="STRING" id="436114.SYO3AOP1_1451"/>
<dbReference type="KEGG" id="sul:SYO3AOP1_1451"/>
<dbReference type="eggNOG" id="COG0777">
    <property type="taxonomic scope" value="Bacteria"/>
</dbReference>
<dbReference type="HOGENOM" id="CLU_015486_1_0_0"/>
<dbReference type="UniPathway" id="UPA00655">
    <property type="reaction ID" value="UER00711"/>
</dbReference>
<dbReference type="GO" id="GO:0009317">
    <property type="term" value="C:acetyl-CoA carboxylase complex"/>
    <property type="evidence" value="ECO:0007669"/>
    <property type="project" value="InterPro"/>
</dbReference>
<dbReference type="GO" id="GO:0003989">
    <property type="term" value="F:acetyl-CoA carboxylase activity"/>
    <property type="evidence" value="ECO:0007669"/>
    <property type="project" value="InterPro"/>
</dbReference>
<dbReference type="GO" id="GO:0005524">
    <property type="term" value="F:ATP binding"/>
    <property type="evidence" value="ECO:0007669"/>
    <property type="project" value="UniProtKB-KW"/>
</dbReference>
<dbReference type="GO" id="GO:0016743">
    <property type="term" value="F:carboxyl- or carbamoyltransferase activity"/>
    <property type="evidence" value="ECO:0007669"/>
    <property type="project" value="UniProtKB-UniRule"/>
</dbReference>
<dbReference type="GO" id="GO:0008270">
    <property type="term" value="F:zinc ion binding"/>
    <property type="evidence" value="ECO:0007669"/>
    <property type="project" value="UniProtKB-UniRule"/>
</dbReference>
<dbReference type="GO" id="GO:0006633">
    <property type="term" value="P:fatty acid biosynthetic process"/>
    <property type="evidence" value="ECO:0007669"/>
    <property type="project" value="UniProtKB-KW"/>
</dbReference>
<dbReference type="GO" id="GO:2001295">
    <property type="term" value="P:malonyl-CoA biosynthetic process"/>
    <property type="evidence" value="ECO:0007669"/>
    <property type="project" value="UniProtKB-UniRule"/>
</dbReference>
<dbReference type="Gene3D" id="3.90.226.10">
    <property type="entry name" value="2-enoyl-CoA Hydratase, Chain A, domain 1"/>
    <property type="match status" value="1"/>
</dbReference>
<dbReference type="HAMAP" id="MF_01395">
    <property type="entry name" value="AcetylCoA_CT_beta"/>
    <property type="match status" value="1"/>
</dbReference>
<dbReference type="InterPro" id="IPR034733">
    <property type="entry name" value="AcCoA_carboxyl_beta"/>
</dbReference>
<dbReference type="InterPro" id="IPR000438">
    <property type="entry name" value="Acetyl_CoA_COase_Trfase_b_su"/>
</dbReference>
<dbReference type="InterPro" id="IPR029045">
    <property type="entry name" value="ClpP/crotonase-like_dom_sf"/>
</dbReference>
<dbReference type="InterPro" id="IPR011762">
    <property type="entry name" value="COA_CT_N"/>
</dbReference>
<dbReference type="InterPro" id="IPR041010">
    <property type="entry name" value="Znf-ACC"/>
</dbReference>
<dbReference type="NCBIfam" id="TIGR00515">
    <property type="entry name" value="accD"/>
    <property type="match status" value="1"/>
</dbReference>
<dbReference type="PANTHER" id="PTHR42995">
    <property type="entry name" value="ACETYL-COENZYME A CARBOXYLASE CARBOXYL TRANSFERASE SUBUNIT BETA, CHLOROPLASTIC"/>
    <property type="match status" value="1"/>
</dbReference>
<dbReference type="PANTHER" id="PTHR42995:SF5">
    <property type="entry name" value="ACETYL-COENZYME A CARBOXYLASE CARBOXYL TRANSFERASE SUBUNIT BETA, CHLOROPLASTIC"/>
    <property type="match status" value="1"/>
</dbReference>
<dbReference type="Pfam" id="PF01039">
    <property type="entry name" value="Carboxyl_trans"/>
    <property type="match status" value="1"/>
</dbReference>
<dbReference type="Pfam" id="PF17848">
    <property type="entry name" value="Zn_ribbon_ACC"/>
    <property type="match status" value="1"/>
</dbReference>
<dbReference type="PRINTS" id="PR01070">
    <property type="entry name" value="ACCCTRFRASEB"/>
</dbReference>
<dbReference type="SUPFAM" id="SSF52096">
    <property type="entry name" value="ClpP/crotonase"/>
    <property type="match status" value="1"/>
</dbReference>
<dbReference type="PROSITE" id="PS50980">
    <property type="entry name" value="COA_CT_NTER"/>
    <property type="match status" value="1"/>
</dbReference>
<comment type="function">
    <text evidence="1">Component of the acetyl coenzyme A carboxylase (ACC) complex. Biotin carboxylase (BC) catalyzes the carboxylation of biotin on its carrier protein (BCCP) and then the CO(2) group is transferred by the transcarboxylase to acetyl-CoA to form malonyl-CoA.</text>
</comment>
<comment type="catalytic activity">
    <reaction evidence="1">
        <text>N(6)-carboxybiotinyl-L-lysyl-[protein] + acetyl-CoA = N(6)-biotinyl-L-lysyl-[protein] + malonyl-CoA</text>
        <dbReference type="Rhea" id="RHEA:54728"/>
        <dbReference type="Rhea" id="RHEA-COMP:10505"/>
        <dbReference type="Rhea" id="RHEA-COMP:10506"/>
        <dbReference type="ChEBI" id="CHEBI:57288"/>
        <dbReference type="ChEBI" id="CHEBI:57384"/>
        <dbReference type="ChEBI" id="CHEBI:83144"/>
        <dbReference type="ChEBI" id="CHEBI:83145"/>
        <dbReference type="EC" id="2.1.3.15"/>
    </reaction>
</comment>
<comment type="cofactor">
    <cofactor evidence="1">
        <name>Zn(2+)</name>
        <dbReference type="ChEBI" id="CHEBI:29105"/>
    </cofactor>
    <text evidence="1">Binds 1 zinc ion per subunit.</text>
</comment>
<comment type="pathway">
    <text evidence="1">Lipid metabolism; malonyl-CoA biosynthesis; malonyl-CoA from acetyl-CoA: step 1/1.</text>
</comment>
<comment type="subunit">
    <text evidence="1">Acetyl-CoA carboxylase is a heterohexamer composed of biotin carboxyl carrier protein (AccB), biotin carboxylase (AccC) and two subunits each of ACCase subunit alpha (AccA) and ACCase subunit beta (AccD).</text>
</comment>
<comment type="subcellular location">
    <subcellularLocation>
        <location evidence="1">Cytoplasm</location>
    </subcellularLocation>
</comment>
<comment type="similarity">
    <text evidence="1">Belongs to the AccD/PCCB family.</text>
</comment>
<proteinExistence type="inferred from homology"/>
<feature type="chain" id="PRO_0000389892" description="Acetyl-coenzyme A carboxylase carboxyl transferase subunit beta">
    <location>
        <begin position="1"/>
        <end position="280"/>
    </location>
</feature>
<feature type="domain" description="CoA carboxyltransferase N-terminal" evidence="2">
    <location>
        <begin position="24"/>
        <end position="280"/>
    </location>
</feature>
<feature type="zinc finger region" description="C4-type" evidence="1">
    <location>
        <begin position="28"/>
        <end position="50"/>
    </location>
</feature>
<feature type="binding site" evidence="1">
    <location>
        <position position="28"/>
    </location>
    <ligand>
        <name>Zn(2+)</name>
        <dbReference type="ChEBI" id="CHEBI:29105"/>
    </ligand>
</feature>
<feature type="binding site" evidence="1">
    <location>
        <position position="31"/>
    </location>
    <ligand>
        <name>Zn(2+)</name>
        <dbReference type="ChEBI" id="CHEBI:29105"/>
    </ligand>
</feature>
<feature type="binding site" evidence="1">
    <location>
        <position position="47"/>
    </location>
    <ligand>
        <name>Zn(2+)</name>
        <dbReference type="ChEBI" id="CHEBI:29105"/>
    </ligand>
</feature>
<feature type="binding site" evidence="1">
    <location>
        <position position="50"/>
    </location>
    <ligand>
        <name>Zn(2+)</name>
        <dbReference type="ChEBI" id="CHEBI:29105"/>
    </ligand>
</feature>
<accession>B2V5V9</accession>
<evidence type="ECO:0000255" key="1">
    <source>
        <dbReference type="HAMAP-Rule" id="MF_01395"/>
    </source>
</evidence>
<evidence type="ECO:0000255" key="2">
    <source>
        <dbReference type="PROSITE-ProRule" id="PRU01136"/>
    </source>
</evidence>
<gene>
    <name evidence="1" type="primary">accD</name>
    <name type="ordered locus">SYO3AOP1_1451</name>
</gene>
<reference key="1">
    <citation type="journal article" date="2009" name="J. Bacteriol.">
        <title>Complete and draft genome sequences of six members of the Aquificales.</title>
        <authorList>
            <person name="Reysenbach A.-L."/>
            <person name="Hamamura N."/>
            <person name="Podar M."/>
            <person name="Griffiths E."/>
            <person name="Ferreira S."/>
            <person name="Hochstein R."/>
            <person name="Heidelberg J."/>
            <person name="Johnson J."/>
            <person name="Mead D."/>
            <person name="Pohorille A."/>
            <person name="Sarmiento M."/>
            <person name="Schweighofer K."/>
            <person name="Seshadri R."/>
            <person name="Voytek M.A."/>
        </authorList>
    </citation>
    <scope>NUCLEOTIDE SEQUENCE [LARGE SCALE GENOMIC DNA]</scope>
    <source>
        <strain>YO3AOP1</strain>
    </source>
</reference>
<sequence length="280" mass="31375">MGLKDFVDKLKNIKKSRIKIEEGAWIKCDKCKNILYIEDLLKNLKICPHCGYTFRMNAKERVDSLLDKVYSYDLFPKIKPVDIIGFKDTKRYKDRLKEAQEKTGLNDAIIIAHGNIYDREVVLASMDFNFMGGSMGSVVGAKFVRGVEFAIEKSIPFISVAASGGARMQESIVSLMQMAKTAIAIDRLNKAGILYISVLTDPTMGGVSASFAFLGDIIIAEPESLIGFAGPRVIEQTIRQQLPEGFQRAEFLLEKGQIDMVVDRKNLKKTIYTLIRHTHG</sequence>
<keyword id="KW-0067">ATP-binding</keyword>
<keyword id="KW-0963">Cytoplasm</keyword>
<keyword id="KW-0275">Fatty acid biosynthesis</keyword>
<keyword id="KW-0276">Fatty acid metabolism</keyword>
<keyword id="KW-0444">Lipid biosynthesis</keyword>
<keyword id="KW-0443">Lipid metabolism</keyword>
<keyword id="KW-0479">Metal-binding</keyword>
<keyword id="KW-0547">Nucleotide-binding</keyword>
<keyword id="KW-0808">Transferase</keyword>
<keyword id="KW-0862">Zinc</keyword>
<keyword id="KW-0863">Zinc-finger</keyword>
<name>ACCD_SULSY</name>
<protein>
    <recommendedName>
        <fullName evidence="1">Acetyl-coenzyme A carboxylase carboxyl transferase subunit beta</fullName>
        <shortName evidence="1">ACCase subunit beta</shortName>
        <shortName evidence="1">Acetyl-CoA carboxylase carboxyltransferase subunit beta</shortName>
        <ecNumber evidence="1">2.1.3.15</ecNumber>
    </recommendedName>
</protein>